<feature type="chain" id="PRO_1000118924" description="Ribonuclease 3">
    <location>
        <begin position="1"/>
        <end position="226"/>
    </location>
</feature>
<feature type="domain" description="RNase III" evidence="1">
    <location>
        <begin position="6"/>
        <end position="128"/>
    </location>
</feature>
<feature type="domain" description="DRBM" evidence="1">
    <location>
        <begin position="155"/>
        <end position="225"/>
    </location>
</feature>
<feature type="active site" evidence="1">
    <location>
        <position position="45"/>
    </location>
</feature>
<feature type="active site" evidence="1">
    <location>
        <position position="117"/>
    </location>
</feature>
<feature type="binding site" evidence="1">
    <location>
        <position position="41"/>
    </location>
    <ligand>
        <name>Mg(2+)</name>
        <dbReference type="ChEBI" id="CHEBI:18420"/>
    </ligand>
</feature>
<feature type="binding site" evidence="1">
    <location>
        <position position="114"/>
    </location>
    <ligand>
        <name>Mg(2+)</name>
        <dbReference type="ChEBI" id="CHEBI:18420"/>
    </ligand>
</feature>
<feature type="binding site" evidence="1">
    <location>
        <position position="117"/>
    </location>
    <ligand>
        <name>Mg(2+)</name>
        <dbReference type="ChEBI" id="CHEBI:18420"/>
    </ligand>
</feature>
<organism>
    <name type="scientific">Escherichia coli O81 (strain ED1a)</name>
    <dbReference type="NCBI Taxonomy" id="585397"/>
    <lineage>
        <taxon>Bacteria</taxon>
        <taxon>Pseudomonadati</taxon>
        <taxon>Pseudomonadota</taxon>
        <taxon>Gammaproteobacteria</taxon>
        <taxon>Enterobacterales</taxon>
        <taxon>Enterobacteriaceae</taxon>
        <taxon>Escherichia</taxon>
    </lineage>
</organism>
<proteinExistence type="inferred from homology"/>
<comment type="function">
    <text evidence="1">Digests double-stranded RNA. Involved in the processing of primary rRNA transcript to yield the immediate precursors to the large and small rRNAs (23S and 16S). Processes some mRNAs, and tRNAs when they are encoded in the rRNA operon. Processes pre-crRNA and tracrRNA of type II CRISPR loci if present in the organism.</text>
</comment>
<comment type="catalytic activity">
    <reaction evidence="1">
        <text>Endonucleolytic cleavage to 5'-phosphomonoester.</text>
        <dbReference type="EC" id="3.1.26.3"/>
    </reaction>
</comment>
<comment type="cofactor">
    <cofactor evidence="1">
        <name>Mg(2+)</name>
        <dbReference type="ChEBI" id="CHEBI:18420"/>
    </cofactor>
</comment>
<comment type="subunit">
    <text evidence="1">Homodimer.</text>
</comment>
<comment type="subcellular location">
    <subcellularLocation>
        <location evidence="1">Cytoplasm</location>
    </subcellularLocation>
</comment>
<comment type="similarity">
    <text evidence="1">Belongs to the ribonuclease III family.</text>
</comment>
<reference key="1">
    <citation type="journal article" date="2009" name="PLoS Genet.">
        <title>Organised genome dynamics in the Escherichia coli species results in highly diverse adaptive paths.</title>
        <authorList>
            <person name="Touchon M."/>
            <person name="Hoede C."/>
            <person name="Tenaillon O."/>
            <person name="Barbe V."/>
            <person name="Baeriswyl S."/>
            <person name="Bidet P."/>
            <person name="Bingen E."/>
            <person name="Bonacorsi S."/>
            <person name="Bouchier C."/>
            <person name="Bouvet O."/>
            <person name="Calteau A."/>
            <person name="Chiapello H."/>
            <person name="Clermont O."/>
            <person name="Cruveiller S."/>
            <person name="Danchin A."/>
            <person name="Diard M."/>
            <person name="Dossat C."/>
            <person name="Karoui M.E."/>
            <person name="Frapy E."/>
            <person name="Garry L."/>
            <person name="Ghigo J.M."/>
            <person name="Gilles A.M."/>
            <person name="Johnson J."/>
            <person name="Le Bouguenec C."/>
            <person name="Lescat M."/>
            <person name="Mangenot S."/>
            <person name="Martinez-Jehanne V."/>
            <person name="Matic I."/>
            <person name="Nassif X."/>
            <person name="Oztas S."/>
            <person name="Petit M.A."/>
            <person name="Pichon C."/>
            <person name="Rouy Z."/>
            <person name="Ruf C.S."/>
            <person name="Schneider D."/>
            <person name="Tourret J."/>
            <person name="Vacherie B."/>
            <person name="Vallenet D."/>
            <person name="Medigue C."/>
            <person name="Rocha E.P.C."/>
            <person name="Denamur E."/>
        </authorList>
    </citation>
    <scope>NUCLEOTIDE SEQUENCE [LARGE SCALE GENOMIC DNA]</scope>
    <source>
        <strain>ED1a</strain>
    </source>
</reference>
<evidence type="ECO:0000255" key="1">
    <source>
        <dbReference type="HAMAP-Rule" id="MF_00104"/>
    </source>
</evidence>
<sequence>MNPIVINRLQRKLGYTFNHQELLQQALTHRSASSKHNERLEFLGDSILSYVIANALYHRFPRVDEGDMSRMRATLVRGNTLAELAREFELGECLRLGPGELKSGGFRRESILADTVEALIGGVFLDSDIQTVEKLILNWYQTRLDEISPGDKQKDPKTRLQEYLQGRHLPLPTYLVVQVRGEAHDQEFTIHCQVSGLSEPVVGTGSSRRKAEQAAAEQALKKLELE</sequence>
<name>RNC_ECO81</name>
<accession>B7MYJ8</accession>
<gene>
    <name evidence="1" type="primary">rnc</name>
    <name type="ordered locus">ECED1_2996</name>
</gene>
<keyword id="KW-0963">Cytoplasm</keyword>
<keyword id="KW-0255">Endonuclease</keyword>
<keyword id="KW-0378">Hydrolase</keyword>
<keyword id="KW-0460">Magnesium</keyword>
<keyword id="KW-0479">Metal-binding</keyword>
<keyword id="KW-0507">mRNA processing</keyword>
<keyword id="KW-0540">Nuclease</keyword>
<keyword id="KW-0694">RNA-binding</keyword>
<keyword id="KW-0698">rRNA processing</keyword>
<keyword id="KW-0699">rRNA-binding</keyword>
<keyword id="KW-0819">tRNA processing</keyword>
<dbReference type="EC" id="3.1.26.3" evidence="1"/>
<dbReference type="EMBL" id="CU928162">
    <property type="protein sequence ID" value="CAR09164.2"/>
    <property type="molecule type" value="Genomic_DNA"/>
</dbReference>
<dbReference type="RefSeq" id="WP_001068343.1">
    <property type="nucleotide sequence ID" value="NC_011745.1"/>
</dbReference>
<dbReference type="SMR" id="B7MYJ8"/>
<dbReference type="GeneID" id="93774524"/>
<dbReference type="KEGG" id="ecq:ECED1_2996"/>
<dbReference type="HOGENOM" id="CLU_000907_1_1_6"/>
<dbReference type="Proteomes" id="UP000000748">
    <property type="component" value="Chromosome"/>
</dbReference>
<dbReference type="GO" id="GO:0005737">
    <property type="term" value="C:cytoplasm"/>
    <property type="evidence" value="ECO:0007669"/>
    <property type="project" value="UniProtKB-SubCell"/>
</dbReference>
<dbReference type="GO" id="GO:0003725">
    <property type="term" value="F:double-stranded RNA binding"/>
    <property type="evidence" value="ECO:0007669"/>
    <property type="project" value="TreeGrafter"/>
</dbReference>
<dbReference type="GO" id="GO:0046872">
    <property type="term" value="F:metal ion binding"/>
    <property type="evidence" value="ECO:0007669"/>
    <property type="project" value="UniProtKB-KW"/>
</dbReference>
<dbReference type="GO" id="GO:0004525">
    <property type="term" value="F:ribonuclease III activity"/>
    <property type="evidence" value="ECO:0007669"/>
    <property type="project" value="UniProtKB-UniRule"/>
</dbReference>
<dbReference type="GO" id="GO:0019843">
    <property type="term" value="F:rRNA binding"/>
    <property type="evidence" value="ECO:0007669"/>
    <property type="project" value="UniProtKB-KW"/>
</dbReference>
<dbReference type="GO" id="GO:0006397">
    <property type="term" value="P:mRNA processing"/>
    <property type="evidence" value="ECO:0007669"/>
    <property type="project" value="UniProtKB-UniRule"/>
</dbReference>
<dbReference type="GO" id="GO:0010468">
    <property type="term" value="P:regulation of gene expression"/>
    <property type="evidence" value="ECO:0007669"/>
    <property type="project" value="TreeGrafter"/>
</dbReference>
<dbReference type="GO" id="GO:0006364">
    <property type="term" value="P:rRNA processing"/>
    <property type="evidence" value="ECO:0007669"/>
    <property type="project" value="UniProtKB-UniRule"/>
</dbReference>
<dbReference type="GO" id="GO:0008033">
    <property type="term" value="P:tRNA processing"/>
    <property type="evidence" value="ECO:0007669"/>
    <property type="project" value="UniProtKB-KW"/>
</dbReference>
<dbReference type="CDD" id="cd10845">
    <property type="entry name" value="DSRM_RNAse_III_family"/>
    <property type="match status" value="1"/>
</dbReference>
<dbReference type="CDD" id="cd00593">
    <property type="entry name" value="RIBOc"/>
    <property type="match status" value="1"/>
</dbReference>
<dbReference type="FunFam" id="1.10.1520.10:FF:000001">
    <property type="entry name" value="Ribonuclease 3"/>
    <property type="match status" value="1"/>
</dbReference>
<dbReference type="FunFam" id="3.30.160.20:FF:000003">
    <property type="entry name" value="Ribonuclease 3"/>
    <property type="match status" value="1"/>
</dbReference>
<dbReference type="Gene3D" id="3.30.160.20">
    <property type="match status" value="1"/>
</dbReference>
<dbReference type="Gene3D" id="1.10.1520.10">
    <property type="entry name" value="Ribonuclease III domain"/>
    <property type="match status" value="1"/>
</dbReference>
<dbReference type="HAMAP" id="MF_00104">
    <property type="entry name" value="RNase_III"/>
    <property type="match status" value="1"/>
</dbReference>
<dbReference type="InterPro" id="IPR014720">
    <property type="entry name" value="dsRBD_dom"/>
</dbReference>
<dbReference type="InterPro" id="IPR011907">
    <property type="entry name" value="RNase_III"/>
</dbReference>
<dbReference type="InterPro" id="IPR000999">
    <property type="entry name" value="RNase_III_dom"/>
</dbReference>
<dbReference type="InterPro" id="IPR036389">
    <property type="entry name" value="RNase_III_sf"/>
</dbReference>
<dbReference type="NCBIfam" id="TIGR02191">
    <property type="entry name" value="RNaseIII"/>
    <property type="match status" value="1"/>
</dbReference>
<dbReference type="PANTHER" id="PTHR11207:SF0">
    <property type="entry name" value="RIBONUCLEASE 3"/>
    <property type="match status" value="1"/>
</dbReference>
<dbReference type="PANTHER" id="PTHR11207">
    <property type="entry name" value="RIBONUCLEASE III"/>
    <property type="match status" value="1"/>
</dbReference>
<dbReference type="Pfam" id="PF00035">
    <property type="entry name" value="dsrm"/>
    <property type="match status" value="1"/>
</dbReference>
<dbReference type="Pfam" id="PF14622">
    <property type="entry name" value="Ribonucleas_3_3"/>
    <property type="match status" value="1"/>
</dbReference>
<dbReference type="SMART" id="SM00358">
    <property type="entry name" value="DSRM"/>
    <property type="match status" value="1"/>
</dbReference>
<dbReference type="SMART" id="SM00535">
    <property type="entry name" value="RIBOc"/>
    <property type="match status" value="1"/>
</dbReference>
<dbReference type="SUPFAM" id="SSF54768">
    <property type="entry name" value="dsRNA-binding domain-like"/>
    <property type="match status" value="1"/>
</dbReference>
<dbReference type="SUPFAM" id="SSF69065">
    <property type="entry name" value="RNase III domain-like"/>
    <property type="match status" value="1"/>
</dbReference>
<dbReference type="PROSITE" id="PS50137">
    <property type="entry name" value="DS_RBD"/>
    <property type="match status" value="1"/>
</dbReference>
<dbReference type="PROSITE" id="PS00517">
    <property type="entry name" value="RNASE_3_1"/>
    <property type="match status" value="1"/>
</dbReference>
<dbReference type="PROSITE" id="PS50142">
    <property type="entry name" value="RNASE_3_2"/>
    <property type="match status" value="1"/>
</dbReference>
<protein>
    <recommendedName>
        <fullName evidence="1">Ribonuclease 3</fullName>
        <ecNumber evidence="1">3.1.26.3</ecNumber>
    </recommendedName>
    <alternativeName>
        <fullName evidence="1">Ribonuclease III</fullName>
        <shortName evidence="1">RNase III</shortName>
    </alternativeName>
</protein>